<proteinExistence type="inferred from homology"/>
<reference key="1">
    <citation type="journal article" date="2008" name="Genome Res.">
        <title>Comparative genome analysis of Salmonella enteritidis PT4 and Salmonella gallinarum 287/91 provides insights into evolutionary and host adaptation pathways.</title>
        <authorList>
            <person name="Thomson N.R."/>
            <person name="Clayton D.J."/>
            <person name="Windhorst D."/>
            <person name="Vernikos G."/>
            <person name="Davidson S."/>
            <person name="Churcher C."/>
            <person name="Quail M.A."/>
            <person name="Stevens M."/>
            <person name="Jones M.A."/>
            <person name="Watson M."/>
            <person name="Barron A."/>
            <person name="Layton A."/>
            <person name="Pickard D."/>
            <person name="Kingsley R.A."/>
            <person name="Bignell A."/>
            <person name="Clark L."/>
            <person name="Harris B."/>
            <person name="Ormond D."/>
            <person name="Abdellah Z."/>
            <person name="Brooks K."/>
            <person name="Cherevach I."/>
            <person name="Chillingworth T."/>
            <person name="Woodward J."/>
            <person name="Norberczak H."/>
            <person name="Lord A."/>
            <person name="Arrowsmith C."/>
            <person name="Jagels K."/>
            <person name="Moule S."/>
            <person name="Mungall K."/>
            <person name="Saunders M."/>
            <person name="Whitehead S."/>
            <person name="Chabalgoity J.A."/>
            <person name="Maskell D."/>
            <person name="Humphreys T."/>
            <person name="Roberts M."/>
            <person name="Barrow P.A."/>
            <person name="Dougan G."/>
            <person name="Parkhill J."/>
        </authorList>
    </citation>
    <scope>NUCLEOTIDE SEQUENCE [LARGE SCALE GENOMIC DNA]</scope>
    <source>
        <strain>287/91 / NCTC 13346</strain>
    </source>
</reference>
<name>XGPT_SALG2</name>
<sequence>MSEKYVVTWDMLQIHARKLASRLMPSEQWKGIIAVSRGGLVPGALLARELGIRHVDTVCISSYDHDNQRELKVLKRAEGDGEGFIVIDDLVDTGGTAVAIREMYPKAHFVTIFAKPAGRPLVDDYVIDIPQNTWIEQPWDMGVVFVPPISGR</sequence>
<gene>
    <name evidence="1" type="primary">gpt</name>
    <name type="ordered locus">SG0328</name>
</gene>
<dbReference type="EC" id="2.4.2.-" evidence="1"/>
<dbReference type="EC" id="2.4.2.22" evidence="1"/>
<dbReference type="EMBL" id="AM933173">
    <property type="protein sequence ID" value="CAR36230.1"/>
    <property type="molecule type" value="Genomic_DNA"/>
</dbReference>
<dbReference type="RefSeq" id="WP_001292018.1">
    <property type="nucleotide sequence ID" value="NC_011274.1"/>
</dbReference>
<dbReference type="SMR" id="B5R5R4"/>
<dbReference type="GeneID" id="66754798"/>
<dbReference type="KEGG" id="seg:SG0328"/>
<dbReference type="HOGENOM" id="CLU_080904_3_0_6"/>
<dbReference type="UniPathway" id="UPA00602">
    <property type="reaction ID" value="UER00658"/>
</dbReference>
<dbReference type="UniPathway" id="UPA00909">
    <property type="reaction ID" value="UER00887"/>
</dbReference>
<dbReference type="Proteomes" id="UP000008321">
    <property type="component" value="Chromosome"/>
</dbReference>
<dbReference type="GO" id="GO:0005829">
    <property type="term" value="C:cytosol"/>
    <property type="evidence" value="ECO:0007669"/>
    <property type="project" value="TreeGrafter"/>
</dbReference>
<dbReference type="GO" id="GO:0005886">
    <property type="term" value="C:plasma membrane"/>
    <property type="evidence" value="ECO:0007669"/>
    <property type="project" value="UniProtKB-SubCell"/>
</dbReference>
<dbReference type="GO" id="GO:0052657">
    <property type="term" value="F:guanine phosphoribosyltransferase activity"/>
    <property type="evidence" value="ECO:0007669"/>
    <property type="project" value="RHEA"/>
</dbReference>
<dbReference type="GO" id="GO:0004422">
    <property type="term" value="F:hypoxanthine phosphoribosyltransferase activity"/>
    <property type="evidence" value="ECO:0007669"/>
    <property type="project" value="RHEA"/>
</dbReference>
<dbReference type="GO" id="GO:0000287">
    <property type="term" value="F:magnesium ion binding"/>
    <property type="evidence" value="ECO:0007669"/>
    <property type="project" value="UniProtKB-UniRule"/>
</dbReference>
<dbReference type="GO" id="GO:0000310">
    <property type="term" value="F:xanthine phosphoribosyltransferase activity"/>
    <property type="evidence" value="ECO:0007669"/>
    <property type="project" value="UniProtKB-UniRule"/>
</dbReference>
<dbReference type="GO" id="GO:0032263">
    <property type="term" value="P:GMP salvage"/>
    <property type="evidence" value="ECO:0007669"/>
    <property type="project" value="UniProtKB-UniRule"/>
</dbReference>
<dbReference type="GO" id="GO:0032264">
    <property type="term" value="P:IMP salvage"/>
    <property type="evidence" value="ECO:0007669"/>
    <property type="project" value="TreeGrafter"/>
</dbReference>
<dbReference type="GO" id="GO:0006166">
    <property type="term" value="P:purine ribonucleoside salvage"/>
    <property type="evidence" value="ECO:0007669"/>
    <property type="project" value="UniProtKB-KW"/>
</dbReference>
<dbReference type="GO" id="GO:0032265">
    <property type="term" value="P:XMP salvage"/>
    <property type="evidence" value="ECO:0007669"/>
    <property type="project" value="UniProtKB-UniRule"/>
</dbReference>
<dbReference type="CDD" id="cd06223">
    <property type="entry name" value="PRTases_typeI"/>
    <property type="match status" value="1"/>
</dbReference>
<dbReference type="FunFam" id="3.40.50.2020:FF:000009">
    <property type="entry name" value="Xanthine phosphoribosyltransferase"/>
    <property type="match status" value="1"/>
</dbReference>
<dbReference type="Gene3D" id="3.40.50.2020">
    <property type="match status" value="1"/>
</dbReference>
<dbReference type="HAMAP" id="MF_01903">
    <property type="entry name" value="XGPRT"/>
    <property type="match status" value="1"/>
</dbReference>
<dbReference type="InterPro" id="IPR000836">
    <property type="entry name" value="PRibTrfase_dom"/>
</dbReference>
<dbReference type="InterPro" id="IPR029057">
    <property type="entry name" value="PRTase-like"/>
</dbReference>
<dbReference type="InterPro" id="IPR023747">
    <property type="entry name" value="Xanthine_Guanine_PRibTrfase"/>
</dbReference>
<dbReference type="NCBIfam" id="NF006613">
    <property type="entry name" value="PRK09177.1"/>
    <property type="match status" value="1"/>
</dbReference>
<dbReference type="PANTHER" id="PTHR39563">
    <property type="entry name" value="XANTHINE PHOSPHORIBOSYLTRANSFERASE"/>
    <property type="match status" value="1"/>
</dbReference>
<dbReference type="PANTHER" id="PTHR39563:SF1">
    <property type="entry name" value="XANTHINE-GUANINE PHOSPHORIBOSYLTRANSFERASE"/>
    <property type="match status" value="1"/>
</dbReference>
<dbReference type="Pfam" id="PF00156">
    <property type="entry name" value="Pribosyltran"/>
    <property type="match status" value="1"/>
</dbReference>
<dbReference type="SUPFAM" id="SSF53271">
    <property type="entry name" value="PRTase-like"/>
    <property type="match status" value="1"/>
</dbReference>
<dbReference type="PROSITE" id="PS00103">
    <property type="entry name" value="PUR_PYR_PR_TRANSFER"/>
    <property type="match status" value="1"/>
</dbReference>
<protein>
    <recommendedName>
        <fullName evidence="1">Xanthine-guanine phosphoribosyltransferase</fullName>
        <shortName evidence="1">XGPRT</shortName>
        <ecNumber evidence="1">2.4.2.-</ecNumber>
        <ecNumber evidence="1">2.4.2.22</ecNumber>
    </recommendedName>
    <alternativeName>
        <fullName evidence="1">Xanthine phosphoribosyltransferase</fullName>
    </alternativeName>
</protein>
<organism>
    <name type="scientific">Salmonella gallinarum (strain 287/91 / NCTC 13346)</name>
    <dbReference type="NCBI Taxonomy" id="550538"/>
    <lineage>
        <taxon>Bacteria</taxon>
        <taxon>Pseudomonadati</taxon>
        <taxon>Pseudomonadota</taxon>
        <taxon>Gammaproteobacteria</taxon>
        <taxon>Enterobacterales</taxon>
        <taxon>Enterobacteriaceae</taxon>
        <taxon>Salmonella</taxon>
    </lineage>
</organism>
<accession>B5R5R4</accession>
<keyword id="KW-0997">Cell inner membrane</keyword>
<keyword id="KW-1003">Cell membrane</keyword>
<keyword id="KW-0328">Glycosyltransferase</keyword>
<keyword id="KW-0460">Magnesium</keyword>
<keyword id="KW-0472">Membrane</keyword>
<keyword id="KW-0479">Metal-binding</keyword>
<keyword id="KW-0660">Purine salvage</keyword>
<keyword id="KW-0808">Transferase</keyword>
<evidence type="ECO:0000255" key="1">
    <source>
        <dbReference type="HAMAP-Rule" id="MF_01903"/>
    </source>
</evidence>
<feature type="chain" id="PRO_1000188755" description="Xanthine-guanine phosphoribosyltransferase">
    <location>
        <begin position="1"/>
        <end position="152"/>
    </location>
</feature>
<feature type="binding site" evidence="1">
    <location>
        <begin position="37"/>
        <end position="38"/>
    </location>
    <ligand>
        <name>5-phospho-alpha-D-ribose 1-diphosphate</name>
        <dbReference type="ChEBI" id="CHEBI:58017"/>
    </ligand>
</feature>
<feature type="binding site" evidence="1">
    <location>
        <position position="69"/>
    </location>
    <ligand>
        <name>5-phospho-alpha-D-ribose 1-diphosphate</name>
        <dbReference type="ChEBI" id="CHEBI:58017"/>
    </ligand>
</feature>
<feature type="binding site" evidence="1">
    <location>
        <position position="69"/>
    </location>
    <ligand>
        <name>GMP</name>
        <dbReference type="ChEBI" id="CHEBI:58115"/>
    </ligand>
</feature>
<feature type="binding site" evidence="1">
    <location>
        <begin position="88"/>
        <end position="96"/>
    </location>
    <ligand>
        <name>5-phospho-alpha-D-ribose 1-diphosphate</name>
        <dbReference type="ChEBI" id="CHEBI:58017"/>
    </ligand>
</feature>
<feature type="binding site" evidence="1">
    <location>
        <position position="89"/>
    </location>
    <ligand>
        <name>Mg(2+)</name>
        <dbReference type="ChEBI" id="CHEBI:18420"/>
    </ligand>
</feature>
<feature type="binding site" evidence="1">
    <location>
        <begin position="92"/>
        <end position="96"/>
    </location>
    <ligand>
        <name>GMP</name>
        <dbReference type="ChEBI" id="CHEBI:58115"/>
    </ligand>
</feature>
<feature type="binding site" evidence="1">
    <location>
        <position position="92"/>
    </location>
    <ligand>
        <name>guanine</name>
        <dbReference type="ChEBI" id="CHEBI:16235"/>
    </ligand>
</feature>
<feature type="binding site" evidence="1">
    <location>
        <position position="92"/>
    </location>
    <ligand>
        <name>xanthine</name>
        <dbReference type="ChEBI" id="CHEBI:17712"/>
    </ligand>
</feature>
<feature type="binding site" evidence="1">
    <location>
        <begin position="134"/>
        <end position="135"/>
    </location>
    <ligand>
        <name>GMP</name>
        <dbReference type="ChEBI" id="CHEBI:58115"/>
    </ligand>
</feature>
<feature type="binding site" evidence="1">
    <location>
        <position position="135"/>
    </location>
    <ligand>
        <name>guanine</name>
        <dbReference type="ChEBI" id="CHEBI:16235"/>
    </ligand>
</feature>
<feature type="binding site" evidence="1">
    <location>
        <position position="135"/>
    </location>
    <ligand>
        <name>xanthine</name>
        <dbReference type="ChEBI" id="CHEBI:17712"/>
    </ligand>
</feature>
<comment type="function">
    <text evidence="1">Purine salvage pathway enzyme that catalyzes the transfer of the ribosyl-5-phosphate group from 5-phospho-alpha-D-ribose 1-diphosphate (PRPP) to the N9 position of the 6-oxopurines guanine and xanthine to form the corresponding ribonucleotides GMP (guanosine 5'-monophosphate) and XMP (xanthosine 5'-monophosphate), with the release of PPi. To a lesser extent, also acts on hypoxanthine.</text>
</comment>
<comment type="catalytic activity">
    <reaction evidence="1">
        <text>GMP + diphosphate = guanine + 5-phospho-alpha-D-ribose 1-diphosphate</text>
        <dbReference type="Rhea" id="RHEA:25424"/>
        <dbReference type="ChEBI" id="CHEBI:16235"/>
        <dbReference type="ChEBI" id="CHEBI:33019"/>
        <dbReference type="ChEBI" id="CHEBI:58017"/>
        <dbReference type="ChEBI" id="CHEBI:58115"/>
    </reaction>
    <physiologicalReaction direction="right-to-left" evidence="1">
        <dbReference type="Rhea" id="RHEA:25426"/>
    </physiologicalReaction>
</comment>
<comment type="catalytic activity">
    <reaction evidence="1">
        <text>XMP + diphosphate = xanthine + 5-phospho-alpha-D-ribose 1-diphosphate</text>
        <dbReference type="Rhea" id="RHEA:10800"/>
        <dbReference type="ChEBI" id="CHEBI:17712"/>
        <dbReference type="ChEBI" id="CHEBI:33019"/>
        <dbReference type="ChEBI" id="CHEBI:57464"/>
        <dbReference type="ChEBI" id="CHEBI:58017"/>
        <dbReference type="EC" id="2.4.2.22"/>
    </reaction>
    <physiologicalReaction direction="right-to-left" evidence="1">
        <dbReference type="Rhea" id="RHEA:10802"/>
    </physiologicalReaction>
</comment>
<comment type="catalytic activity">
    <reaction evidence="1">
        <text>IMP + diphosphate = hypoxanthine + 5-phospho-alpha-D-ribose 1-diphosphate</text>
        <dbReference type="Rhea" id="RHEA:17973"/>
        <dbReference type="ChEBI" id="CHEBI:17368"/>
        <dbReference type="ChEBI" id="CHEBI:33019"/>
        <dbReference type="ChEBI" id="CHEBI:58017"/>
        <dbReference type="ChEBI" id="CHEBI:58053"/>
    </reaction>
    <physiologicalReaction direction="right-to-left" evidence="1">
        <dbReference type="Rhea" id="RHEA:17975"/>
    </physiologicalReaction>
</comment>
<comment type="cofactor">
    <cofactor evidence="1">
        <name>Mg(2+)</name>
        <dbReference type="ChEBI" id="CHEBI:18420"/>
    </cofactor>
</comment>
<comment type="pathway">
    <text evidence="1">Purine metabolism; GMP biosynthesis via salvage pathway; GMP from guanine: step 1/1.</text>
</comment>
<comment type="pathway">
    <text evidence="1">Purine metabolism; XMP biosynthesis via salvage pathway; XMP from xanthine: step 1/1.</text>
</comment>
<comment type="subunit">
    <text evidence="1">Homotetramer.</text>
</comment>
<comment type="subcellular location">
    <subcellularLocation>
        <location evidence="1">Cell inner membrane</location>
        <topology evidence="1">Peripheral membrane protein</topology>
    </subcellularLocation>
</comment>
<comment type="similarity">
    <text evidence="1">Belongs to the purine/pyrimidine phosphoribosyltransferase family. XGPT subfamily.</text>
</comment>